<organism>
    <name type="scientific">Saccharum officinarum</name>
    <name type="common">Sugarcane</name>
    <dbReference type="NCBI Taxonomy" id="4547"/>
    <lineage>
        <taxon>Eukaryota</taxon>
        <taxon>Viridiplantae</taxon>
        <taxon>Streptophyta</taxon>
        <taxon>Embryophyta</taxon>
        <taxon>Tracheophyta</taxon>
        <taxon>Spermatophyta</taxon>
        <taxon>Magnoliopsida</taxon>
        <taxon>Liliopsida</taxon>
        <taxon>Poales</taxon>
        <taxon>Poaceae</taxon>
        <taxon>PACMAD clade</taxon>
        <taxon>Panicoideae</taxon>
        <taxon>Andropogonodae</taxon>
        <taxon>Andropogoneae</taxon>
        <taxon>Saccharinae</taxon>
        <taxon>Saccharum</taxon>
        <taxon>Saccharum officinarum species complex</taxon>
    </lineage>
</organism>
<comment type="function">
    <text evidence="2">One of the components of the core complex of photosystem II (PSII), required for its stability and/or assembly. PSII is a light-driven water:plastoquinone oxidoreductase that uses light energy to abstract electrons from H(2)O, generating O(2) and a proton gradient subsequently used for ATP formation. It consists of a core antenna complex that captures photons, and an electron transfer chain that converts photonic excitation into a charge separation.</text>
</comment>
<comment type="subunit">
    <text evidence="2">PSII is composed of 1 copy each of membrane proteins PsbA, PsbB, PsbC, PsbD, PsbE, PsbF, PsbH, PsbI, PsbJ, PsbK, PsbL, PsbM, PsbT, PsbX, PsbY, PsbZ, Psb30/Ycf12, at least 3 peripheral proteins of the oxygen-evolving complex and a large number of cofactors. It forms dimeric complexes.</text>
</comment>
<comment type="subcellular location">
    <subcellularLocation>
        <location evidence="2">Plastid</location>
        <location evidence="2">Chloroplast thylakoid membrane</location>
        <topology evidence="2">Single-pass membrane protein</topology>
    </subcellularLocation>
</comment>
<comment type="PTM">
    <text evidence="2">Phosphorylation is a light-dependent reaction catalyzed by a membrane-bound kinase; phosphorylation occurs on Thr residue(s) in the N-terminus of the protein.</text>
</comment>
<comment type="similarity">
    <text evidence="2">Belongs to the PsbH family.</text>
</comment>
<accession>Q6ENT5</accession>
<protein>
    <recommendedName>
        <fullName evidence="2">Photosystem II reaction center protein H</fullName>
        <shortName evidence="2">PSII-H</shortName>
    </recommendedName>
    <alternativeName>
        <fullName evidence="2">Photosystem II 10 kDa phosphoprotein</fullName>
    </alternativeName>
</protein>
<reference key="1">
    <citation type="journal article" date="2004" name="DNA Res.">
        <title>Complete nucleotide sequence of the sugarcane (Saccharum officinarum) chloroplast genome: a comparative analysis of four monocot chloroplast genomes.</title>
        <authorList>
            <person name="Asano T."/>
            <person name="Tsudzuki T."/>
            <person name="Takahashi S."/>
            <person name="Shimada H."/>
            <person name="Kadowaki K."/>
        </authorList>
    </citation>
    <scope>NUCLEOTIDE SEQUENCE [LARGE SCALE GENOMIC DNA]</scope>
</reference>
<sequence>MATQTVEDSSRPKPKRTGAGSLLKPLNSEYGKVAPGWGTTPFMGVAMALFAIFLSIILEIYNSSVLLDGILTN</sequence>
<evidence type="ECO:0000250" key="1">
    <source>
        <dbReference type="UniProtKB" id="P56780"/>
    </source>
</evidence>
<evidence type="ECO:0000255" key="2">
    <source>
        <dbReference type="HAMAP-Rule" id="MF_00752"/>
    </source>
</evidence>
<evidence type="ECO:0000256" key="3">
    <source>
        <dbReference type="SAM" id="MobiDB-lite"/>
    </source>
</evidence>
<geneLocation type="chloroplast"/>
<feature type="initiator methionine" description="Removed" evidence="1">
    <location>
        <position position="1"/>
    </location>
</feature>
<feature type="chain" id="PRO_0000070535" description="Photosystem II reaction center protein H">
    <location>
        <begin position="2"/>
        <end position="73"/>
    </location>
</feature>
<feature type="transmembrane region" description="Helical" evidence="2">
    <location>
        <begin position="41"/>
        <end position="61"/>
    </location>
</feature>
<feature type="region of interest" description="Disordered" evidence="3">
    <location>
        <begin position="1"/>
        <end position="23"/>
    </location>
</feature>
<feature type="modified residue" description="Phosphothreonine" evidence="2">
    <location>
        <position position="3"/>
    </location>
</feature>
<feature type="modified residue" description="Phosphothreonine" evidence="2">
    <location>
        <position position="5"/>
    </location>
</feature>
<name>PSBH_SACOF</name>
<keyword id="KW-0150">Chloroplast</keyword>
<keyword id="KW-0472">Membrane</keyword>
<keyword id="KW-0597">Phosphoprotein</keyword>
<keyword id="KW-0602">Photosynthesis</keyword>
<keyword id="KW-0604">Photosystem II</keyword>
<keyword id="KW-0934">Plastid</keyword>
<keyword id="KW-0793">Thylakoid</keyword>
<keyword id="KW-0812">Transmembrane</keyword>
<keyword id="KW-1133">Transmembrane helix</keyword>
<proteinExistence type="inferred from homology"/>
<dbReference type="EMBL" id="AP006714">
    <property type="protein sequence ID" value="BAD27321.1"/>
    <property type="molecule type" value="Genomic_DNA"/>
</dbReference>
<dbReference type="RefSeq" id="YP_009389599.1">
    <property type="nucleotide sequence ID" value="NC_035224.1"/>
</dbReference>
<dbReference type="SMR" id="Q6ENT5"/>
<dbReference type="GeneID" id="33347821"/>
<dbReference type="GO" id="GO:0009535">
    <property type="term" value="C:chloroplast thylakoid membrane"/>
    <property type="evidence" value="ECO:0007669"/>
    <property type="project" value="UniProtKB-SubCell"/>
</dbReference>
<dbReference type="GO" id="GO:0009523">
    <property type="term" value="C:photosystem II"/>
    <property type="evidence" value="ECO:0007669"/>
    <property type="project" value="UniProtKB-KW"/>
</dbReference>
<dbReference type="GO" id="GO:0042301">
    <property type="term" value="F:phosphate ion binding"/>
    <property type="evidence" value="ECO:0007669"/>
    <property type="project" value="InterPro"/>
</dbReference>
<dbReference type="GO" id="GO:0015979">
    <property type="term" value="P:photosynthesis"/>
    <property type="evidence" value="ECO:0007669"/>
    <property type="project" value="UniProtKB-UniRule"/>
</dbReference>
<dbReference type="GO" id="GO:0050821">
    <property type="term" value="P:protein stabilization"/>
    <property type="evidence" value="ECO:0007669"/>
    <property type="project" value="InterPro"/>
</dbReference>
<dbReference type="FunFam" id="1.20.5.880:FF:000001">
    <property type="entry name" value="Photosystem II reaction center protein H"/>
    <property type="match status" value="1"/>
</dbReference>
<dbReference type="Gene3D" id="1.20.5.880">
    <property type="entry name" value="Photosystem II reaction center protein H"/>
    <property type="match status" value="1"/>
</dbReference>
<dbReference type="HAMAP" id="MF_00752">
    <property type="entry name" value="PSII_PsbH"/>
    <property type="match status" value="1"/>
</dbReference>
<dbReference type="InterPro" id="IPR001056">
    <property type="entry name" value="PSII_PsbH"/>
</dbReference>
<dbReference type="InterPro" id="IPR036863">
    <property type="entry name" value="PSII_PsbH_sf"/>
</dbReference>
<dbReference type="NCBIfam" id="NF002728">
    <property type="entry name" value="PRK02624.1"/>
    <property type="match status" value="1"/>
</dbReference>
<dbReference type="PANTHER" id="PTHR34469">
    <property type="entry name" value="PHOTOSYSTEM II REACTION CENTER PROTEIN H"/>
    <property type="match status" value="1"/>
</dbReference>
<dbReference type="PANTHER" id="PTHR34469:SF4">
    <property type="entry name" value="PHOTOSYSTEM II REACTION CENTER PROTEIN H"/>
    <property type="match status" value="1"/>
</dbReference>
<dbReference type="Pfam" id="PF00737">
    <property type="entry name" value="PsbH"/>
    <property type="match status" value="1"/>
</dbReference>
<dbReference type="SUPFAM" id="SSF161025">
    <property type="entry name" value="Photosystem II 10 kDa phosphoprotein PsbH"/>
    <property type="match status" value="1"/>
</dbReference>
<gene>
    <name evidence="2" type="primary">psbH</name>
</gene>